<comment type="function">
    <text evidence="1">Catalyzes the formation of N(4)-acetylcytidine (ac(4)C) at the wobble position of elongator tRNA(Met), using acetate and ATP as substrates. First activates an acetate ion to form acetyladenylate (Ac-AMP) and then transfers the acetyl group to tRNA to form ac(4)C34.</text>
</comment>
<comment type="catalytic activity">
    <reaction evidence="1">
        <text>cytidine(34) in elongator tRNA(Met) + acetate + ATP = N(4)-acetylcytidine(34) in elongator tRNA(Met) + AMP + diphosphate</text>
        <dbReference type="Rhea" id="RHEA:58144"/>
        <dbReference type="Rhea" id="RHEA-COMP:10693"/>
        <dbReference type="Rhea" id="RHEA-COMP:10694"/>
        <dbReference type="ChEBI" id="CHEBI:30089"/>
        <dbReference type="ChEBI" id="CHEBI:30616"/>
        <dbReference type="ChEBI" id="CHEBI:33019"/>
        <dbReference type="ChEBI" id="CHEBI:74900"/>
        <dbReference type="ChEBI" id="CHEBI:82748"/>
        <dbReference type="ChEBI" id="CHEBI:456215"/>
    </reaction>
</comment>
<comment type="subcellular location">
    <subcellularLocation>
        <location evidence="1">Cytoplasm</location>
    </subcellularLocation>
</comment>
<comment type="similarity">
    <text evidence="1">Belongs to the TmcAL family.</text>
</comment>
<gene>
    <name evidence="1" type="primary">tmcAL</name>
    <name type="ordered locus">SPs1630</name>
</gene>
<organism>
    <name type="scientific">Streptococcus pyogenes serotype M3 (strain SSI-1)</name>
    <dbReference type="NCBI Taxonomy" id="193567"/>
    <lineage>
        <taxon>Bacteria</taxon>
        <taxon>Bacillati</taxon>
        <taxon>Bacillota</taxon>
        <taxon>Bacilli</taxon>
        <taxon>Lactobacillales</taxon>
        <taxon>Streptococcaceae</taxon>
        <taxon>Streptococcus</taxon>
    </lineage>
</organism>
<dbReference type="EC" id="6.3.4.-" evidence="1"/>
<dbReference type="EMBL" id="BA000034">
    <property type="protein sequence ID" value="BAC64725.1"/>
    <property type="molecule type" value="Genomic_DNA"/>
</dbReference>
<dbReference type="RefSeq" id="WP_002991082.1">
    <property type="nucleotide sequence ID" value="NC_004606.1"/>
</dbReference>
<dbReference type="SMR" id="P0DH17"/>
<dbReference type="KEGG" id="sps:SPs1630"/>
<dbReference type="HOGENOM" id="CLU_038915_0_2_9"/>
<dbReference type="GO" id="GO:0005737">
    <property type="term" value="C:cytoplasm"/>
    <property type="evidence" value="ECO:0007669"/>
    <property type="project" value="UniProtKB-SubCell"/>
</dbReference>
<dbReference type="GO" id="GO:0005524">
    <property type="term" value="F:ATP binding"/>
    <property type="evidence" value="ECO:0007669"/>
    <property type="project" value="UniProtKB-KW"/>
</dbReference>
<dbReference type="GO" id="GO:0016879">
    <property type="term" value="F:ligase activity, forming carbon-nitrogen bonds"/>
    <property type="evidence" value="ECO:0007669"/>
    <property type="project" value="UniProtKB-UniRule"/>
</dbReference>
<dbReference type="GO" id="GO:0000049">
    <property type="term" value="F:tRNA binding"/>
    <property type="evidence" value="ECO:0007669"/>
    <property type="project" value="UniProtKB-KW"/>
</dbReference>
<dbReference type="GO" id="GO:0006400">
    <property type="term" value="P:tRNA modification"/>
    <property type="evidence" value="ECO:0007669"/>
    <property type="project" value="UniProtKB-UniRule"/>
</dbReference>
<dbReference type="Gene3D" id="3.40.50.620">
    <property type="entry name" value="HUPs"/>
    <property type="match status" value="1"/>
</dbReference>
<dbReference type="HAMAP" id="MF_01539">
    <property type="entry name" value="TmcAL"/>
    <property type="match status" value="1"/>
</dbReference>
<dbReference type="InterPro" id="IPR014729">
    <property type="entry name" value="Rossmann-like_a/b/a_fold"/>
</dbReference>
<dbReference type="InterPro" id="IPR008513">
    <property type="entry name" value="tRNA(Met)_cyd_acetate_ligase"/>
</dbReference>
<dbReference type="NCBIfam" id="NF010191">
    <property type="entry name" value="PRK13670.1"/>
    <property type="match status" value="1"/>
</dbReference>
<dbReference type="PANTHER" id="PTHR37825">
    <property type="entry name" value="TRNA(MET) CYTIDINE ACETATE LIGASE"/>
    <property type="match status" value="1"/>
</dbReference>
<dbReference type="PANTHER" id="PTHR37825:SF1">
    <property type="entry name" value="TRNA(MET) CYTIDINE ACETATE LIGASE"/>
    <property type="match status" value="1"/>
</dbReference>
<dbReference type="Pfam" id="PF05636">
    <property type="entry name" value="HIGH_NTase1"/>
    <property type="match status" value="1"/>
</dbReference>
<dbReference type="SUPFAM" id="SSF52374">
    <property type="entry name" value="Nucleotidylyl transferase"/>
    <property type="match status" value="1"/>
</dbReference>
<feature type="chain" id="PRO_0000411648" description="tRNA(Met) cytidine acetate ligase">
    <location>
        <begin position="1"/>
        <end position="368"/>
    </location>
</feature>
<feature type="binding site" evidence="1">
    <location>
        <begin position="7"/>
        <end position="20"/>
    </location>
    <ligand>
        <name>ATP</name>
        <dbReference type="ChEBI" id="CHEBI:30616"/>
    </ligand>
</feature>
<feature type="binding site" evidence="1">
    <location>
        <position position="96"/>
    </location>
    <ligand>
        <name>ATP</name>
        <dbReference type="ChEBI" id="CHEBI:30616"/>
    </ligand>
</feature>
<feature type="binding site" evidence="1">
    <location>
        <position position="152"/>
    </location>
    <ligand>
        <name>ATP</name>
        <dbReference type="ChEBI" id="CHEBI:30616"/>
    </ligand>
</feature>
<feature type="binding site" evidence="1">
    <location>
        <position position="175"/>
    </location>
    <ligand>
        <name>ATP</name>
        <dbReference type="ChEBI" id="CHEBI:30616"/>
    </ligand>
</feature>
<reference key="1">
    <citation type="journal article" date="2003" name="Genome Res.">
        <title>Genome sequence of an M3 strain of Streptococcus pyogenes reveals a large-scale genomic rearrangement in invasive strains and new insights into phage evolution.</title>
        <authorList>
            <person name="Nakagawa I."/>
            <person name="Kurokawa K."/>
            <person name="Yamashita A."/>
            <person name="Nakata M."/>
            <person name="Tomiyasu Y."/>
            <person name="Okahashi N."/>
            <person name="Kawabata S."/>
            <person name="Yamazaki K."/>
            <person name="Shiba T."/>
            <person name="Yasunaga T."/>
            <person name="Hayashi H."/>
            <person name="Hattori M."/>
            <person name="Hamada S."/>
        </authorList>
    </citation>
    <scope>NUCLEOTIDE SEQUENCE [LARGE SCALE GENOMIC DNA]</scope>
    <source>
        <strain>SSI-1</strain>
    </source>
</reference>
<protein>
    <recommendedName>
        <fullName evidence="1">tRNA(Met) cytidine acetate ligase</fullName>
        <ecNumber evidence="1">6.3.4.-</ecNumber>
    </recommendedName>
</protein>
<accession>P0DH17</accession>
<accession>Q7CFG3</accession>
<accession>Q8P2K9</accession>
<name>TMCAL_STRPQ</name>
<sequence length="368" mass="41646">MTVTGIIAEFNPFHNGHKYLLETAEGLKIIAMSGNFMQRGEPALIDKWIRSEMALKNGADIVVELPFFVSVQSADYFAQGAIDILCQLGIQQLAFGTENVIDYQKLIKVYEKKSEQMTAYLSTLEDTLSYPQKTQKMWEIFAGVKFSGQTPNHILGLSYAKASAGKHIQLCPIKRQGAAYHSKDKNHLLASASAIRQHLNDWDFISHSVPNAGLLINNPHMSWDHYFSFLKYQILNHSDLTSIFQVNDELASRIKKAIKVSQNIDHLVDTVATKRYTKARVRRILTYILVNAKEPTLPKGIHILGFTSKGQAHLKKLKKSRPLITRIGAETWDEMTQKADSIYQLGHQDIPEQSFGRIPIIIKNERLN</sequence>
<keyword id="KW-0067">ATP-binding</keyword>
<keyword id="KW-0963">Cytoplasm</keyword>
<keyword id="KW-0436">Ligase</keyword>
<keyword id="KW-0547">Nucleotide-binding</keyword>
<keyword id="KW-0694">RNA-binding</keyword>
<keyword id="KW-0819">tRNA processing</keyword>
<keyword id="KW-0820">tRNA-binding</keyword>
<proteinExistence type="inferred from homology"/>
<evidence type="ECO:0000255" key="1">
    <source>
        <dbReference type="HAMAP-Rule" id="MF_01539"/>
    </source>
</evidence>